<proteinExistence type="inferred from homology"/>
<protein>
    <recommendedName>
        <fullName evidence="1">Probable redox regulatory protein ML2435</fullName>
    </recommendedName>
</protein>
<dbReference type="EMBL" id="U00018">
    <property type="protein sequence ID" value="AAA17251.1"/>
    <property type="status" value="ALT_INIT"/>
    <property type="molecule type" value="Genomic_DNA"/>
</dbReference>
<dbReference type="EMBL" id="AL583925">
    <property type="protein sequence ID" value="CAC31952.1"/>
    <property type="molecule type" value="Genomic_DNA"/>
</dbReference>
<dbReference type="PIR" id="H87213">
    <property type="entry name" value="H87213"/>
</dbReference>
<dbReference type="PIR" id="S72915">
    <property type="entry name" value="S72915"/>
</dbReference>
<dbReference type="RefSeq" id="NP_302579.1">
    <property type="nucleotide sequence ID" value="NC_002677.1"/>
</dbReference>
<dbReference type="STRING" id="272631.gene:17576298"/>
<dbReference type="KEGG" id="mle:ML2435"/>
<dbReference type="PATRIC" id="fig|272631.5.peg.4675"/>
<dbReference type="Leproma" id="ML2435"/>
<dbReference type="eggNOG" id="ENOG502Z8QX">
    <property type="taxonomic scope" value="Bacteria"/>
</dbReference>
<dbReference type="HOGENOM" id="CLU_071594_0_0_11"/>
<dbReference type="OrthoDB" id="3394274at2"/>
<dbReference type="Proteomes" id="UP000000806">
    <property type="component" value="Chromosome"/>
</dbReference>
<evidence type="ECO:0000250" key="1">
    <source>
        <dbReference type="UniProtKB" id="P9WKU5"/>
    </source>
</evidence>
<evidence type="ECO:0000305" key="2"/>
<comment type="function">
    <text evidence="1">Essential for maintaining intracellular redox homeostasis.</text>
</comment>
<comment type="similarity">
    <text evidence="2">Belongs to the Rv0495c family.</text>
</comment>
<comment type="sequence caution" evidence="2">
    <conflict type="erroneous initiation">
        <sequence resource="EMBL-CDS" id="AAA17251"/>
    </conflict>
    <text>Extended N-terminus.</text>
</comment>
<name>RHRP_MYCLE</name>
<sequence>MSSCPESGSTFEYVANSHLEPVHPGEEVDLDFTREWVEFYDPDNSEQLIAADLTWLLSRWTCVFGTPACRGTVAGRPDDGCCSHGAFLSDDADRTRLDDAVKKLSHDDWQFREKGLGRKGYLELDEHDGQSQFRTRKHKNACIFLNRPGFPIGAGCALHSKALKLGVPPRTMKPDICWQLPIRHSQEWVTRPDGTEILKTTVTEYDRRSWGSGGADLHWYCTGDPASHVDSKQLWESLADELTELLGAKAYAKLAAICKRRNRLGIIAVHPATQEAK</sequence>
<feature type="chain" id="PRO_0000103697" description="Probable redox regulatory protein ML2435">
    <location>
        <begin position="1"/>
        <end position="277"/>
    </location>
</feature>
<organism>
    <name type="scientific">Mycobacterium leprae (strain TN)</name>
    <dbReference type="NCBI Taxonomy" id="272631"/>
    <lineage>
        <taxon>Bacteria</taxon>
        <taxon>Bacillati</taxon>
        <taxon>Actinomycetota</taxon>
        <taxon>Actinomycetes</taxon>
        <taxon>Mycobacteriales</taxon>
        <taxon>Mycobacteriaceae</taxon>
        <taxon>Mycobacterium</taxon>
    </lineage>
</organism>
<reference key="1">
    <citation type="submission" date="1994-03" db="EMBL/GenBank/DDBJ databases">
        <authorList>
            <person name="Smith D.R."/>
            <person name="Robison K."/>
        </authorList>
    </citation>
    <scope>NUCLEOTIDE SEQUENCE [GENOMIC DNA]</scope>
</reference>
<reference key="2">
    <citation type="journal article" date="2001" name="Nature">
        <title>Massive gene decay in the leprosy bacillus.</title>
        <authorList>
            <person name="Cole S.T."/>
            <person name="Eiglmeier K."/>
            <person name="Parkhill J."/>
            <person name="James K.D."/>
            <person name="Thomson N.R."/>
            <person name="Wheeler P.R."/>
            <person name="Honore N."/>
            <person name="Garnier T."/>
            <person name="Churcher C.M."/>
            <person name="Harris D.E."/>
            <person name="Mungall K.L."/>
            <person name="Basham D."/>
            <person name="Brown D."/>
            <person name="Chillingworth T."/>
            <person name="Connor R."/>
            <person name="Davies R.M."/>
            <person name="Devlin K."/>
            <person name="Duthoy S."/>
            <person name="Feltwell T."/>
            <person name="Fraser A."/>
            <person name="Hamlin N."/>
            <person name="Holroyd S."/>
            <person name="Hornsby T."/>
            <person name="Jagels K."/>
            <person name="Lacroix C."/>
            <person name="Maclean J."/>
            <person name="Moule S."/>
            <person name="Murphy L.D."/>
            <person name="Oliver K."/>
            <person name="Quail M.A."/>
            <person name="Rajandream M.A."/>
            <person name="Rutherford K.M."/>
            <person name="Rutter S."/>
            <person name="Seeger K."/>
            <person name="Simon S."/>
            <person name="Simmonds M."/>
            <person name="Skelton J."/>
            <person name="Squares R."/>
            <person name="Squares S."/>
            <person name="Stevens K."/>
            <person name="Taylor K."/>
            <person name="Whitehead S."/>
            <person name="Woodward J.R."/>
            <person name="Barrell B.G."/>
        </authorList>
    </citation>
    <scope>NUCLEOTIDE SEQUENCE [LARGE SCALE GENOMIC DNA]</scope>
    <source>
        <strain>TN</strain>
    </source>
</reference>
<gene>
    <name type="ordered locus">ML2435</name>
    <name type="ORF">B2168_F1_37</name>
</gene>
<accession>P54579</accession>
<accession>Q9CB52</accession>
<keyword id="KW-1185">Reference proteome</keyword>